<protein>
    <recommendedName>
        <fullName evidence="4">Gamma-aminobutyric acid receptor subunit alpha-2</fullName>
    </recommendedName>
    <alternativeName>
        <fullName evidence="4">GABA(A) receptor subunit alpha-2</fullName>
        <shortName evidence="4">GABAAR subunit alpha-2</shortName>
    </alternativeName>
</protein>
<evidence type="ECO:0000250" key="1">
    <source>
        <dbReference type="UniProtKB" id="P10063"/>
    </source>
</evidence>
<evidence type="ECO:0000250" key="2">
    <source>
        <dbReference type="UniProtKB" id="P14867"/>
    </source>
</evidence>
<evidence type="ECO:0000250" key="3">
    <source>
        <dbReference type="UniProtKB" id="P23576"/>
    </source>
</evidence>
<evidence type="ECO:0000250" key="4">
    <source>
        <dbReference type="UniProtKB" id="P26048"/>
    </source>
</evidence>
<evidence type="ECO:0000250" key="5">
    <source>
        <dbReference type="UniProtKB" id="P28472"/>
    </source>
</evidence>
<evidence type="ECO:0000250" key="6">
    <source>
        <dbReference type="UniProtKB" id="P47869"/>
    </source>
</evidence>
<evidence type="ECO:0000250" key="7">
    <source>
        <dbReference type="UniProtKB" id="P62813"/>
    </source>
</evidence>
<evidence type="ECO:0000255" key="8"/>
<evidence type="ECO:0000305" key="9"/>
<accession>Q5RCC5</accession>
<accession>Q5R577</accession>
<name>GBRA2_PONAB</name>
<organism>
    <name type="scientific">Pongo abelii</name>
    <name type="common">Sumatran orangutan</name>
    <name type="synonym">Pongo pygmaeus abelii</name>
    <dbReference type="NCBI Taxonomy" id="9601"/>
    <lineage>
        <taxon>Eukaryota</taxon>
        <taxon>Metazoa</taxon>
        <taxon>Chordata</taxon>
        <taxon>Craniata</taxon>
        <taxon>Vertebrata</taxon>
        <taxon>Euteleostomi</taxon>
        <taxon>Mammalia</taxon>
        <taxon>Eutheria</taxon>
        <taxon>Euarchontoglires</taxon>
        <taxon>Primates</taxon>
        <taxon>Haplorrhini</taxon>
        <taxon>Catarrhini</taxon>
        <taxon>Hominidae</taxon>
        <taxon>Pongo</taxon>
    </lineage>
</organism>
<dbReference type="EMBL" id="CR858349">
    <property type="protein sequence ID" value="CAH90582.1"/>
    <property type="molecule type" value="mRNA"/>
</dbReference>
<dbReference type="EMBL" id="CR860987">
    <property type="protein sequence ID" value="CAH93089.1"/>
    <property type="molecule type" value="mRNA"/>
</dbReference>
<dbReference type="RefSeq" id="NP_001126829.1">
    <property type="nucleotide sequence ID" value="NM_001133357.1"/>
</dbReference>
<dbReference type="SMR" id="Q5RCC5"/>
<dbReference type="FunCoup" id="Q5RCC5">
    <property type="interactions" value="590"/>
</dbReference>
<dbReference type="GlyCosmos" id="Q5RCC5">
    <property type="glycosylation" value="2 sites, No reported glycans"/>
</dbReference>
<dbReference type="Ensembl" id="ENSPPYT00000017096.3">
    <property type="protein sequence ID" value="ENSPPYP00000016427.3"/>
    <property type="gene ID" value="ENSPPYG00000014705.3"/>
</dbReference>
<dbReference type="GeneID" id="100173835"/>
<dbReference type="KEGG" id="pon:100173835"/>
<dbReference type="CTD" id="2555"/>
<dbReference type="eggNOG" id="KOG3642">
    <property type="taxonomic scope" value="Eukaryota"/>
</dbReference>
<dbReference type="GeneTree" id="ENSGT00940000157266"/>
<dbReference type="InParanoid" id="Q5RCC5"/>
<dbReference type="OrthoDB" id="203862at2759"/>
<dbReference type="Proteomes" id="UP000001595">
    <property type="component" value="Chromosome 4"/>
</dbReference>
<dbReference type="GO" id="GO:0034707">
    <property type="term" value="C:chloride channel complex"/>
    <property type="evidence" value="ECO:0007669"/>
    <property type="project" value="UniProtKB-KW"/>
</dbReference>
<dbReference type="GO" id="GO:0030659">
    <property type="term" value="C:cytoplasmic vesicle membrane"/>
    <property type="evidence" value="ECO:0007669"/>
    <property type="project" value="UniProtKB-SubCell"/>
</dbReference>
<dbReference type="GO" id="GO:0030425">
    <property type="term" value="C:dendrite"/>
    <property type="evidence" value="ECO:0007669"/>
    <property type="project" value="UniProtKB-SubCell"/>
</dbReference>
<dbReference type="GO" id="GO:1902711">
    <property type="term" value="C:GABA-A receptor complex"/>
    <property type="evidence" value="ECO:0000250"/>
    <property type="project" value="UniProtKB"/>
</dbReference>
<dbReference type="GO" id="GO:0045211">
    <property type="term" value="C:postsynaptic membrane"/>
    <property type="evidence" value="ECO:0007669"/>
    <property type="project" value="UniProtKB-SubCell"/>
</dbReference>
<dbReference type="GO" id="GO:0005254">
    <property type="term" value="F:chloride channel activity"/>
    <property type="evidence" value="ECO:0007669"/>
    <property type="project" value="UniProtKB-KW"/>
</dbReference>
<dbReference type="GO" id="GO:0005230">
    <property type="term" value="F:extracellular ligand-gated monoatomic ion channel activity"/>
    <property type="evidence" value="ECO:0007669"/>
    <property type="project" value="InterPro"/>
</dbReference>
<dbReference type="GO" id="GO:0004890">
    <property type="term" value="F:GABA-A receptor activity"/>
    <property type="evidence" value="ECO:0007669"/>
    <property type="project" value="InterPro"/>
</dbReference>
<dbReference type="GO" id="GO:0007214">
    <property type="term" value="P:gamma-aminobutyric acid signaling pathway"/>
    <property type="evidence" value="ECO:0007669"/>
    <property type="project" value="InterPro"/>
</dbReference>
<dbReference type="GO" id="GO:1904862">
    <property type="term" value="P:inhibitory synapse assembly"/>
    <property type="evidence" value="ECO:0000250"/>
    <property type="project" value="UniProtKB"/>
</dbReference>
<dbReference type="CDD" id="cd19035">
    <property type="entry name" value="LGIC_ECD_GABAAR_A2"/>
    <property type="match status" value="1"/>
</dbReference>
<dbReference type="CDD" id="cd19052">
    <property type="entry name" value="LGIC_TM_GABAAR_alpha"/>
    <property type="match status" value="1"/>
</dbReference>
<dbReference type="FunFam" id="2.70.170.10:FF:000001">
    <property type="entry name" value="Gamma-aminobutyric acid A receptor subunit alpha-2"/>
    <property type="match status" value="1"/>
</dbReference>
<dbReference type="FunFam" id="1.20.58.390:FF:000002">
    <property type="entry name" value="Putative gamma-aminobutyric acid receptor subunit alpha-5"/>
    <property type="match status" value="1"/>
</dbReference>
<dbReference type="Gene3D" id="2.70.170.10">
    <property type="entry name" value="Neurotransmitter-gated ion-channel ligand-binding domain"/>
    <property type="match status" value="1"/>
</dbReference>
<dbReference type="Gene3D" id="1.20.58.390">
    <property type="entry name" value="Neurotransmitter-gated ion-channel transmembrane domain"/>
    <property type="match status" value="1"/>
</dbReference>
<dbReference type="InterPro" id="IPR006028">
    <property type="entry name" value="GABAA/Glycine_rcpt"/>
</dbReference>
<dbReference type="InterPro" id="IPR001390">
    <property type="entry name" value="GABAAa_rcpt"/>
</dbReference>
<dbReference type="InterPro" id="IPR005432">
    <property type="entry name" value="GABBAa2_rcpt"/>
</dbReference>
<dbReference type="InterPro" id="IPR047024">
    <property type="entry name" value="Gabra-1-6_TM"/>
</dbReference>
<dbReference type="InterPro" id="IPR047023">
    <property type="entry name" value="Gabra-2_ECD"/>
</dbReference>
<dbReference type="InterPro" id="IPR006202">
    <property type="entry name" value="Neur_chan_lig-bd"/>
</dbReference>
<dbReference type="InterPro" id="IPR036734">
    <property type="entry name" value="Neur_chan_lig-bd_sf"/>
</dbReference>
<dbReference type="InterPro" id="IPR006201">
    <property type="entry name" value="Neur_channel"/>
</dbReference>
<dbReference type="InterPro" id="IPR036719">
    <property type="entry name" value="Neuro-gated_channel_TM_sf"/>
</dbReference>
<dbReference type="InterPro" id="IPR038050">
    <property type="entry name" value="Neuro_actylchol_rec"/>
</dbReference>
<dbReference type="InterPro" id="IPR006029">
    <property type="entry name" value="Neurotrans-gated_channel_TM"/>
</dbReference>
<dbReference type="InterPro" id="IPR018000">
    <property type="entry name" value="Neurotransmitter_ion_chnl_CS"/>
</dbReference>
<dbReference type="NCBIfam" id="TIGR00860">
    <property type="entry name" value="LIC"/>
    <property type="match status" value="1"/>
</dbReference>
<dbReference type="PANTHER" id="PTHR18945">
    <property type="entry name" value="NEUROTRANSMITTER GATED ION CHANNEL"/>
    <property type="match status" value="1"/>
</dbReference>
<dbReference type="Pfam" id="PF02931">
    <property type="entry name" value="Neur_chan_LBD"/>
    <property type="match status" value="1"/>
</dbReference>
<dbReference type="Pfam" id="PF02932">
    <property type="entry name" value="Neur_chan_memb"/>
    <property type="match status" value="2"/>
</dbReference>
<dbReference type="PRINTS" id="PR01079">
    <property type="entry name" value="GABAARALPHA"/>
</dbReference>
<dbReference type="PRINTS" id="PR01615">
    <property type="entry name" value="GABAARALPHA2"/>
</dbReference>
<dbReference type="PRINTS" id="PR00253">
    <property type="entry name" value="GABAARECEPTR"/>
</dbReference>
<dbReference type="PRINTS" id="PR00252">
    <property type="entry name" value="NRIONCHANNEL"/>
</dbReference>
<dbReference type="SUPFAM" id="SSF90112">
    <property type="entry name" value="Neurotransmitter-gated ion-channel transmembrane pore"/>
    <property type="match status" value="1"/>
</dbReference>
<dbReference type="SUPFAM" id="SSF63712">
    <property type="entry name" value="Nicotinic receptor ligand binding domain-like"/>
    <property type="match status" value="1"/>
</dbReference>
<dbReference type="PROSITE" id="PS00236">
    <property type="entry name" value="NEUROTR_ION_CHANNEL"/>
    <property type="match status" value="1"/>
</dbReference>
<comment type="function">
    <text evidence="1 2 4 6">Alpha subunit of the heteropentameric ligand-gated chloride channel gated by gamma-aminobutyric acid (GABA), a major inhibitory neurotransmitter in the brain (By similarity). GABA-gated chloride channels, also named GABA(A) receptors (GABAAR), consist of five subunits arranged around a central pore and contain GABA active binding site(s) located at the alpha and beta subunit interface(s) (By similarity). When activated by GABA, GABAARs selectively allow the flow of chloride anions across the cell membrane down their electrochemical gradient (By similarity). Chloride influx into the postsynaptic neuron following GABAAR opening decreases the neuron ability to generate a new action potential, thereby reducing nerve transmission (By similarity). The alpha-2 subunit exhibits synaptogenic activity together with beta-2 and very little to no activity together with beta-3, the gamma-2 subunit being necessary but not sufficient to induce rapid synaptic contacts formation (By similarity).</text>
</comment>
<comment type="catalytic activity">
    <reaction evidence="1">
        <text>chloride(in) = chloride(out)</text>
        <dbReference type="Rhea" id="RHEA:29823"/>
        <dbReference type="ChEBI" id="CHEBI:17996"/>
    </reaction>
</comment>
<comment type="activity regulation">
    <text evidence="1">Activated by pentobarbital (By similarity). Inhibited by the antagonist bicuculline (By similarity).</text>
</comment>
<comment type="subunit">
    <text evidence="3 4 6">Heteropentamer, formed by a combination of alpha (GABRA1-6), beta (GABRB1-3), gamma (GABRG1-3), delta (GABRD), epsilon (GABRE), rho (GABRR1-3), pi (GABRP) and theta (GABRQ) subunits, each subunit exhibiting distinct physiological and pharmacological properties (By similarity). Interacts with UBQLN1 (By similarity). Interacts with KIF21B (By similarity). Interacts with LHFPL4 (By similarity). Interacts with SHISA7; interaction leads to the regulation of GABA(A) receptor trafficking, channel deactivation kinetics and pharmacology (By similarity).</text>
</comment>
<comment type="subcellular location">
    <subcellularLocation>
        <location evidence="4">Postsynaptic cell membrane</location>
        <topology evidence="8">Multi-pass membrane protein</topology>
    </subcellularLocation>
    <subcellularLocation>
        <location evidence="4">Cell membrane</location>
        <topology evidence="8">Multi-pass membrane protein</topology>
    </subcellularLocation>
    <subcellularLocation>
        <location evidence="3">Cytoplasmic vesicle membrane</location>
    </subcellularLocation>
    <subcellularLocation>
        <location evidence="4">Cell projection</location>
        <location evidence="4">Dendrite</location>
    </subcellularLocation>
</comment>
<comment type="domain">
    <text evidence="4">The extracellular domain contributes to synaptic contact formation.</text>
</comment>
<comment type="domain">
    <text evidence="2">The GABA-binding pockets are located at the interface between neighboring alpha and beta subunits.</text>
</comment>
<comment type="domain">
    <text evidence="2">GABAARs subunits share a common topological structure: a peptide sequence made up of a long extracellular N-terminal, four transmembrane domains, intracellular or cytoplasmic domain located between the third and the fourth transmembrane domains.</text>
</comment>
<comment type="PTM">
    <text evidence="4">Glycosylated.</text>
</comment>
<comment type="similarity">
    <text evidence="9">Belongs to the ligand-gated ion channel (TC 1.A.9) family. Gamma-aminobutyric acid receptor (TC 1.A.9.5) subfamily. GABRA2 sub-subfamily.</text>
</comment>
<gene>
    <name type="primary">GABRA2</name>
</gene>
<keyword id="KW-1003">Cell membrane</keyword>
<keyword id="KW-0966">Cell projection</keyword>
<keyword id="KW-0868">Chloride</keyword>
<keyword id="KW-0869">Chloride channel</keyword>
<keyword id="KW-0968">Cytoplasmic vesicle</keyword>
<keyword id="KW-1015">Disulfide bond</keyword>
<keyword id="KW-0325">Glycoprotein</keyword>
<keyword id="KW-0407">Ion channel</keyword>
<keyword id="KW-0406">Ion transport</keyword>
<keyword id="KW-1071">Ligand-gated ion channel</keyword>
<keyword id="KW-0472">Membrane</keyword>
<keyword id="KW-0628">Postsynaptic cell membrane</keyword>
<keyword id="KW-0675">Receptor</keyword>
<keyword id="KW-1185">Reference proteome</keyword>
<keyword id="KW-0732">Signal</keyword>
<keyword id="KW-0770">Synapse</keyword>
<keyword id="KW-0812">Transmembrane</keyword>
<keyword id="KW-1133">Transmembrane helix</keyword>
<keyword id="KW-0813">Transport</keyword>
<proteinExistence type="evidence at transcript level"/>
<reference key="1">
    <citation type="submission" date="2004-11" db="EMBL/GenBank/DDBJ databases">
        <authorList>
            <consortium name="The German cDNA consortium"/>
        </authorList>
    </citation>
    <scope>NUCLEOTIDE SEQUENCE [LARGE SCALE MRNA]</scope>
    <source>
        <tissue>Brain cortex</tissue>
    </source>
</reference>
<feature type="signal peptide" evidence="8">
    <location>
        <begin position="1"/>
        <end position="28"/>
    </location>
</feature>
<feature type="chain" id="PRO_0000352671" description="Gamma-aminobutyric acid receptor subunit alpha-2">
    <location>
        <begin position="29"/>
        <end position="451"/>
    </location>
</feature>
<feature type="topological domain" description="Extracellular" evidence="9">
    <location>
        <begin position="29"/>
        <end position="249"/>
    </location>
</feature>
<feature type="transmembrane region" description="Helical" evidence="8">
    <location>
        <begin position="250"/>
        <end position="270"/>
    </location>
</feature>
<feature type="topological domain" description="Cytoplasmic" evidence="9">
    <location>
        <begin position="271"/>
        <end position="280"/>
    </location>
</feature>
<feature type="transmembrane region" description="Helical" evidence="8">
    <location>
        <begin position="281"/>
        <end position="300"/>
    </location>
</feature>
<feature type="topological domain" description="Extracellular" evidence="9">
    <location>
        <begin position="301"/>
        <end position="311"/>
    </location>
</feature>
<feature type="transmembrane region" description="Helical" evidence="8">
    <location>
        <begin position="312"/>
        <end position="332"/>
    </location>
</feature>
<feature type="topological domain" description="Cytoplasmic" evidence="9">
    <location>
        <begin position="333"/>
        <end position="420"/>
    </location>
</feature>
<feature type="transmembrane region" description="Helical" evidence="8">
    <location>
        <begin position="421"/>
        <end position="441"/>
    </location>
</feature>
<feature type="topological domain" description="Extracellular" evidence="9">
    <location>
        <begin position="442"/>
        <end position="451"/>
    </location>
</feature>
<feature type="binding site" evidence="2">
    <location>
        <position position="94"/>
    </location>
    <ligand>
        <name>4-aminobutanoate</name>
        <dbReference type="ChEBI" id="CHEBI:59888"/>
        <note>ligand shared with the neighboring beta subunit</note>
    </ligand>
</feature>
<feature type="binding site" evidence="7">
    <location>
        <position position="157"/>
    </location>
    <ligand>
        <name>4-aminobutanoate</name>
        <dbReference type="ChEBI" id="CHEBI:59888"/>
        <note>ligand shared with the neighboring beta subunit</note>
    </ligand>
</feature>
<feature type="glycosylation site" description="N-linked (GlcNAc...) asparagine" evidence="8">
    <location>
        <position position="38"/>
    </location>
</feature>
<feature type="glycosylation site" description="N-linked (GlcNAc...) asparagine" evidence="8">
    <location>
        <position position="138"/>
    </location>
</feature>
<feature type="disulfide bond" evidence="5">
    <location>
        <begin position="166"/>
        <end position="180"/>
    </location>
</feature>
<feature type="sequence conflict" description="In Ref. 1; CAH93089." evidence="9" ref="1">
    <original>H</original>
    <variation>R</variation>
    <location>
        <position position="243"/>
    </location>
</feature>
<feature type="sequence conflict" description="In Ref. 1; CAH90582." evidence="9" ref="1">
    <original>I</original>
    <variation>V</variation>
    <location>
        <position position="387"/>
    </location>
</feature>
<sequence>MKTKLNIYNMQLLLFVFLVWDPARLVLANIQEDEAKNNITIFTRILDRLLDGYDNRLRPGLGDSITEVFTNIYVTSFGPVSDTDMEYTIDVFFRQKWKDERLKFKGPMNILRLNNLMASKIWTPDTFFHNGKKSVAHNMTMPNKLLRIQDDGTLLYTMRLTVQAECPMHLEDFPMDAHSCPLKFGSYAYTTSEVTYIWTYNASDSVQVAPDGSRLNQYDLLGQSIGKETIKSSTGEYTVMTAHFHLKRKIGYFVIQTYLPCIMTVILSQVSFWLNRESVPARTVFGVTTVLTMTTLSISARNSLPKVAYATAMDWFIAVCYAFVFSALIEFATVNYFTKRGWAWDGKSVVNDKKKEKASVMIQNNAYAVAVANYAPNLSKDPVLSTISKSATTPEPNKKPENKPAEAKKTFNSVSKIDRMSRIVFPVLFGTFNLVYWATYLNREPVLGVSP</sequence>